<sequence length="396" mass="44406">MSVRLVLAKGREKSLLRRHPWVFSGAVARMEGKASLGETIDIVDHQGKWLARGAYSPASQIRARVWTFDPSESIDIAFFTRRLQQAQKWRDWLAQKDGLDSYRLIAGESDGLPGITIDRFGNFLVLQLLSAGAEYQRAALISVLQTLYPECAIYDRSDVAVRKKEGMELTQGPITGELPPALLPIEEHGMKLLVDIQHGHKTGYYLDQRDSRLATRRYVENKRVLNCFSYTGGFAVSALMGGCSQVVSVDTSHEALDIARQNVELNKLDLSKAEFVRDDVFKLLRTYRDRGEKFDVIVMDPPKFVENKSQLMGACRGYKDINMLAIQLLNEGGILLTFSCSGLMTSDLFQKIIADAAIDAGRDVQFIEQFRQAADHPVIATYPEGLYLKGFACRVM</sequence>
<proteinExistence type="inferred from homology"/>
<accession>B7UN46</accession>
<protein>
    <recommendedName>
        <fullName evidence="1">Ribosomal RNA large subunit methyltransferase I</fullName>
        <ecNumber evidence="1">2.1.1.191</ecNumber>
    </recommendedName>
    <alternativeName>
        <fullName evidence="1">23S rRNA m5C1962 methyltransferase</fullName>
    </alternativeName>
    <alternativeName>
        <fullName evidence="1">rRNA (cytosine-C(5)-)-methyltransferase RlmI</fullName>
    </alternativeName>
</protein>
<comment type="function">
    <text evidence="1">Specifically methylates the cytosine at position 1962 (m5C1962) of 23S rRNA.</text>
</comment>
<comment type="catalytic activity">
    <reaction evidence="1">
        <text>cytidine(1962) in 23S rRNA + S-adenosyl-L-methionine = 5-methylcytidine(1962) in 23S rRNA + S-adenosyl-L-homocysteine + H(+)</text>
        <dbReference type="Rhea" id="RHEA:42912"/>
        <dbReference type="Rhea" id="RHEA-COMP:10382"/>
        <dbReference type="Rhea" id="RHEA-COMP:10386"/>
        <dbReference type="ChEBI" id="CHEBI:15378"/>
        <dbReference type="ChEBI" id="CHEBI:57856"/>
        <dbReference type="ChEBI" id="CHEBI:59789"/>
        <dbReference type="ChEBI" id="CHEBI:74483"/>
        <dbReference type="ChEBI" id="CHEBI:82748"/>
        <dbReference type="EC" id="2.1.1.191"/>
    </reaction>
</comment>
<comment type="subcellular location">
    <subcellularLocation>
        <location evidence="1">Cytoplasm</location>
    </subcellularLocation>
</comment>
<comment type="similarity">
    <text evidence="1">Belongs to the methyltransferase superfamily. RlmI family.</text>
</comment>
<feature type="chain" id="PRO_1000188698" description="Ribosomal RNA large subunit methyltransferase I">
    <location>
        <begin position="1"/>
        <end position="396"/>
    </location>
</feature>
<feature type="domain" description="PUA" evidence="1">
    <location>
        <begin position="2"/>
        <end position="81"/>
    </location>
</feature>
<dbReference type="EC" id="2.1.1.191" evidence="1"/>
<dbReference type="EMBL" id="FM180568">
    <property type="protein sequence ID" value="CAS08501.1"/>
    <property type="molecule type" value="Genomic_DNA"/>
</dbReference>
<dbReference type="RefSeq" id="WP_000116322.1">
    <property type="nucleotide sequence ID" value="NC_011601.1"/>
</dbReference>
<dbReference type="SMR" id="B7UN46"/>
<dbReference type="KEGG" id="ecg:E2348C_0953"/>
<dbReference type="HOGENOM" id="CLU_014042_0_0_6"/>
<dbReference type="Proteomes" id="UP000008205">
    <property type="component" value="Chromosome"/>
</dbReference>
<dbReference type="GO" id="GO:0005737">
    <property type="term" value="C:cytoplasm"/>
    <property type="evidence" value="ECO:0007669"/>
    <property type="project" value="UniProtKB-SubCell"/>
</dbReference>
<dbReference type="GO" id="GO:0003723">
    <property type="term" value="F:RNA binding"/>
    <property type="evidence" value="ECO:0007669"/>
    <property type="project" value="UniProtKB-KW"/>
</dbReference>
<dbReference type="GO" id="GO:0016434">
    <property type="term" value="F:rRNA (cytosine) methyltransferase activity"/>
    <property type="evidence" value="ECO:0007669"/>
    <property type="project" value="UniProtKB-UniRule"/>
</dbReference>
<dbReference type="CDD" id="cd02440">
    <property type="entry name" value="AdoMet_MTases"/>
    <property type="match status" value="1"/>
</dbReference>
<dbReference type="CDD" id="cd21153">
    <property type="entry name" value="PUA_RlmI"/>
    <property type="match status" value="1"/>
</dbReference>
<dbReference type="CDD" id="cd11572">
    <property type="entry name" value="RlmI_M_like"/>
    <property type="match status" value="1"/>
</dbReference>
<dbReference type="FunFam" id="2.30.130.10:FF:000005">
    <property type="entry name" value="Ribosomal RNA large subunit methyltransferase I"/>
    <property type="match status" value="1"/>
</dbReference>
<dbReference type="FunFam" id="3.30.750.80:FF:000002">
    <property type="entry name" value="Ribosomal RNA large subunit methyltransferase I"/>
    <property type="match status" value="1"/>
</dbReference>
<dbReference type="FunFam" id="3.40.50.150:FF:000044">
    <property type="entry name" value="Ribosomal RNA large subunit methyltransferase I"/>
    <property type="match status" value="1"/>
</dbReference>
<dbReference type="Gene3D" id="2.30.130.10">
    <property type="entry name" value="PUA domain"/>
    <property type="match status" value="1"/>
</dbReference>
<dbReference type="Gene3D" id="3.30.750.80">
    <property type="entry name" value="RNA methyltransferase domain (HRMD) like"/>
    <property type="match status" value="1"/>
</dbReference>
<dbReference type="Gene3D" id="3.40.50.150">
    <property type="entry name" value="Vaccinia Virus protein VP39"/>
    <property type="match status" value="1"/>
</dbReference>
<dbReference type="HAMAP" id="MF_01857">
    <property type="entry name" value="23SrRNA_methyltr_I"/>
    <property type="match status" value="1"/>
</dbReference>
<dbReference type="InterPro" id="IPR002478">
    <property type="entry name" value="PUA"/>
</dbReference>
<dbReference type="InterPro" id="IPR015947">
    <property type="entry name" value="PUA-like_sf"/>
</dbReference>
<dbReference type="InterPro" id="IPR036974">
    <property type="entry name" value="PUA_sf"/>
</dbReference>
<dbReference type="InterPro" id="IPR023542">
    <property type="entry name" value="RLMI"/>
</dbReference>
<dbReference type="InterPro" id="IPR041532">
    <property type="entry name" value="RlmI-like_PUA"/>
</dbReference>
<dbReference type="InterPro" id="IPR019614">
    <property type="entry name" value="SAM-dep_methyl-trfase"/>
</dbReference>
<dbReference type="InterPro" id="IPR029063">
    <property type="entry name" value="SAM-dependent_MTases_sf"/>
</dbReference>
<dbReference type="NCBIfam" id="NF011707">
    <property type="entry name" value="PRK15128.1"/>
    <property type="match status" value="1"/>
</dbReference>
<dbReference type="PANTHER" id="PTHR42873">
    <property type="entry name" value="RIBOSOMAL RNA LARGE SUBUNIT METHYLTRANSFERASE"/>
    <property type="match status" value="1"/>
</dbReference>
<dbReference type="PANTHER" id="PTHR42873:SF1">
    <property type="entry name" value="S-ADENOSYLMETHIONINE-DEPENDENT METHYLTRANSFERASE DOMAIN-CONTAINING PROTEIN"/>
    <property type="match status" value="1"/>
</dbReference>
<dbReference type="Pfam" id="PF10672">
    <property type="entry name" value="Methyltrans_SAM"/>
    <property type="match status" value="1"/>
</dbReference>
<dbReference type="Pfam" id="PF17785">
    <property type="entry name" value="PUA_3"/>
    <property type="match status" value="1"/>
</dbReference>
<dbReference type="SMART" id="SM00359">
    <property type="entry name" value="PUA"/>
    <property type="match status" value="1"/>
</dbReference>
<dbReference type="SUPFAM" id="SSF88697">
    <property type="entry name" value="PUA domain-like"/>
    <property type="match status" value="1"/>
</dbReference>
<dbReference type="SUPFAM" id="SSF53335">
    <property type="entry name" value="S-adenosyl-L-methionine-dependent methyltransferases"/>
    <property type="match status" value="1"/>
</dbReference>
<dbReference type="PROSITE" id="PS50890">
    <property type="entry name" value="PUA"/>
    <property type="match status" value="1"/>
</dbReference>
<gene>
    <name evidence="1" type="primary">rlmI</name>
    <name type="ordered locus">E2348C_0953</name>
</gene>
<organism>
    <name type="scientific">Escherichia coli O127:H6 (strain E2348/69 / EPEC)</name>
    <dbReference type="NCBI Taxonomy" id="574521"/>
    <lineage>
        <taxon>Bacteria</taxon>
        <taxon>Pseudomonadati</taxon>
        <taxon>Pseudomonadota</taxon>
        <taxon>Gammaproteobacteria</taxon>
        <taxon>Enterobacterales</taxon>
        <taxon>Enterobacteriaceae</taxon>
        <taxon>Escherichia</taxon>
    </lineage>
</organism>
<reference key="1">
    <citation type="journal article" date="2009" name="J. Bacteriol.">
        <title>Complete genome sequence and comparative genome analysis of enteropathogenic Escherichia coli O127:H6 strain E2348/69.</title>
        <authorList>
            <person name="Iguchi A."/>
            <person name="Thomson N.R."/>
            <person name="Ogura Y."/>
            <person name="Saunders D."/>
            <person name="Ooka T."/>
            <person name="Henderson I.R."/>
            <person name="Harris D."/>
            <person name="Asadulghani M."/>
            <person name="Kurokawa K."/>
            <person name="Dean P."/>
            <person name="Kenny B."/>
            <person name="Quail M.A."/>
            <person name="Thurston S."/>
            <person name="Dougan G."/>
            <person name="Hayashi T."/>
            <person name="Parkhill J."/>
            <person name="Frankel G."/>
        </authorList>
    </citation>
    <scope>NUCLEOTIDE SEQUENCE [LARGE SCALE GENOMIC DNA]</scope>
    <source>
        <strain>E2348/69 / EPEC</strain>
    </source>
</reference>
<keyword id="KW-0963">Cytoplasm</keyword>
<keyword id="KW-0489">Methyltransferase</keyword>
<keyword id="KW-1185">Reference proteome</keyword>
<keyword id="KW-0694">RNA-binding</keyword>
<keyword id="KW-0698">rRNA processing</keyword>
<keyword id="KW-0949">S-adenosyl-L-methionine</keyword>
<keyword id="KW-0808">Transferase</keyword>
<name>RLMI_ECO27</name>
<evidence type="ECO:0000255" key="1">
    <source>
        <dbReference type="HAMAP-Rule" id="MF_01857"/>
    </source>
</evidence>